<proteinExistence type="inferred from homology"/>
<sequence length="180" mass="20343">MTAFKIENETIADGFYACPAVYEDAESITGLLVRTAEWLRDRGSNQWSGLLKGQDIHDITGSIEKGHVFVFKKDEELAAVVMLLPAPSEWDRTLWGDDGHEESIYLHRLAVSRRFAGQGLGARVLQWAETGIHFPEKTRIRLDCVADSDALHSFYRRMGYEFMGADASGYHLFEKEITAE</sequence>
<evidence type="ECO:0000255" key="1">
    <source>
        <dbReference type="PROSITE-ProRule" id="PRU00532"/>
    </source>
</evidence>
<evidence type="ECO:0000305" key="2"/>
<gene>
    <name type="primary">yesJ</name>
    <name type="synonym">yeeN</name>
    <name type="synonym">yfxC</name>
    <name type="synonym">yfxD</name>
    <name type="ordered locus">BSU06920</name>
</gene>
<name>YESJ_BACSU</name>
<reference key="1">
    <citation type="journal article" date="1997" name="Nature">
        <title>The complete genome sequence of the Gram-positive bacterium Bacillus subtilis.</title>
        <authorList>
            <person name="Kunst F."/>
            <person name="Ogasawara N."/>
            <person name="Moszer I."/>
            <person name="Albertini A.M."/>
            <person name="Alloni G."/>
            <person name="Azevedo V."/>
            <person name="Bertero M.G."/>
            <person name="Bessieres P."/>
            <person name="Bolotin A."/>
            <person name="Borchert S."/>
            <person name="Borriss R."/>
            <person name="Boursier L."/>
            <person name="Brans A."/>
            <person name="Braun M."/>
            <person name="Brignell S.C."/>
            <person name="Bron S."/>
            <person name="Brouillet S."/>
            <person name="Bruschi C.V."/>
            <person name="Caldwell B."/>
            <person name="Capuano V."/>
            <person name="Carter N.M."/>
            <person name="Choi S.-K."/>
            <person name="Codani J.-J."/>
            <person name="Connerton I.F."/>
            <person name="Cummings N.J."/>
            <person name="Daniel R.A."/>
            <person name="Denizot F."/>
            <person name="Devine K.M."/>
            <person name="Duesterhoeft A."/>
            <person name="Ehrlich S.D."/>
            <person name="Emmerson P.T."/>
            <person name="Entian K.-D."/>
            <person name="Errington J."/>
            <person name="Fabret C."/>
            <person name="Ferrari E."/>
            <person name="Foulger D."/>
            <person name="Fritz C."/>
            <person name="Fujita M."/>
            <person name="Fujita Y."/>
            <person name="Fuma S."/>
            <person name="Galizzi A."/>
            <person name="Galleron N."/>
            <person name="Ghim S.-Y."/>
            <person name="Glaser P."/>
            <person name="Goffeau A."/>
            <person name="Golightly E.J."/>
            <person name="Grandi G."/>
            <person name="Guiseppi G."/>
            <person name="Guy B.J."/>
            <person name="Haga K."/>
            <person name="Haiech J."/>
            <person name="Harwood C.R."/>
            <person name="Henaut A."/>
            <person name="Hilbert H."/>
            <person name="Holsappel S."/>
            <person name="Hosono S."/>
            <person name="Hullo M.-F."/>
            <person name="Itaya M."/>
            <person name="Jones L.-M."/>
            <person name="Joris B."/>
            <person name="Karamata D."/>
            <person name="Kasahara Y."/>
            <person name="Klaerr-Blanchard M."/>
            <person name="Klein C."/>
            <person name="Kobayashi Y."/>
            <person name="Koetter P."/>
            <person name="Koningstein G."/>
            <person name="Krogh S."/>
            <person name="Kumano M."/>
            <person name="Kurita K."/>
            <person name="Lapidus A."/>
            <person name="Lardinois S."/>
            <person name="Lauber J."/>
            <person name="Lazarevic V."/>
            <person name="Lee S.-M."/>
            <person name="Levine A."/>
            <person name="Liu H."/>
            <person name="Masuda S."/>
            <person name="Mauel C."/>
            <person name="Medigue C."/>
            <person name="Medina N."/>
            <person name="Mellado R.P."/>
            <person name="Mizuno M."/>
            <person name="Moestl D."/>
            <person name="Nakai S."/>
            <person name="Noback M."/>
            <person name="Noone D."/>
            <person name="O'Reilly M."/>
            <person name="Ogawa K."/>
            <person name="Ogiwara A."/>
            <person name="Oudega B."/>
            <person name="Park S.-H."/>
            <person name="Parro V."/>
            <person name="Pohl T.M."/>
            <person name="Portetelle D."/>
            <person name="Porwollik S."/>
            <person name="Prescott A.M."/>
            <person name="Presecan E."/>
            <person name="Pujic P."/>
            <person name="Purnelle B."/>
            <person name="Rapoport G."/>
            <person name="Rey M."/>
            <person name="Reynolds S."/>
            <person name="Rieger M."/>
            <person name="Rivolta C."/>
            <person name="Rocha E."/>
            <person name="Roche B."/>
            <person name="Rose M."/>
            <person name="Sadaie Y."/>
            <person name="Sato T."/>
            <person name="Scanlan E."/>
            <person name="Schleich S."/>
            <person name="Schroeter R."/>
            <person name="Scoffone F."/>
            <person name="Sekiguchi J."/>
            <person name="Sekowska A."/>
            <person name="Seror S.J."/>
            <person name="Serror P."/>
            <person name="Shin B.-S."/>
            <person name="Soldo B."/>
            <person name="Sorokin A."/>
            <person name="Tacconi E."/>
            <person name="Takagi T."/>
            <person name="Takahashi H."/>
            <person name="Takemaru K."/>
            <person name="Takeuchi M."/>
            <person name="Tamakoshi A."/>
            <person name="Tanaka T."/>
            <person name="Terpstra P."/>
            <person name="Tognoni A."/>
            <person name="Tosato V."/>
            <person name="Uchiyama S."/>
            <person name="Vandenbol M."/>
            <person name="Vannier F."/>
            <person name="Vassarotti A."/>
            <person name="Viari A."/>
            <person name="Wambutt R."/>
            <person name="Wedler E."/>
            <person name="Wedler H."/>
            <person name="Weitzenegger T."/>
            <person name="Winters P."/>
            <person name="Wipat A."/>
            <person name="Yamamoto H."/>
            <person name="Yamane K."/>
            <person name="Yasumoto K."/>
            <person name="Yata K."/>
            <person name="Yoshida K."/>
            <person name="Yoshikawa H.-F."/>
            <person name="Zumstein E."/>
            <person name="Yoshikawa H."/>
            <person name="Danchin A."/>
        </authorList>
    </citation>
    <scope>NUCLEOTIDE SEQUENCE [LARGE SCALE GENOMIC DNA]</scope>
    <source>
        <strain>168</strain>
    </source>
</reference>
<accession>O31513</accession>
<dbReference type="EC" id="2.3.1.-"/>
<dbReference type="EMBL" id="AL009126">
    <property type="protein sequence ID" value="CAB12511.1"/>
    <property type="molecule type" value="Genomic_DNA"/>
</dbReference>
<dbReference type="PIR" id="A69796">
    <property type="entry name" value="A69796"/>
</dbReference>
<dbReference type="RefSeq" id="NP_388573.1">
    <property type="nucleotide sequence ID" value="NC_000964.3"/>
</dbReference>
<dbReference type="RefSeq" id="WP_003244053.1">
    <property type="nucleotide sequence ID" value="NZ_OZ025638.1"/>
</dbReference>
<dbReference type="SMR" id="O31513"/>
<dbReference type="FunCoup" id="O31513">
    <property type="interactions" value="2"/>
</dbReference>
<dbReference type="STRING" id="224308.BSU06920"/>
<dbReference type="PaxDb" id="224308-BSU06920"/>
<dbReference type="EnsemblBacteria" id="CAB12511">
    <property type="protein sequence ID" value="CAB12511"/>
    <property type="gene ID" value="BSU_06920"/>
</dbReference>
<dbReference type="GeneID" id="936070"/>
<dbReference type="KEGG" id="bsu:BSU06920"/>
<dbReference type="PATRIC" id="fig|224308.179.peg.752"/>
<dbReference type="eggNOG" id="COG0454">
    <property type="taxonomic scope" value="Bacteria"/>
</dbReference>
<dbReference type="InParanoid" id="O31513"/>
<dbReference type="OrthoDB" id="6382410at2"/>
<dbReference type="PhylomeDB" id="O31513"/>
<dbReference type="BioCyc" id="BSUB:BSU06920-MONOMER"/>
<dbReference type="Proteomes" id="UP000001570">
    <property type="component" value="Chromosome"/>
</dbReference>
<dbReference type="GO" id="GO:0016747">
    <property type="term" value="F:acyltransferase activity, transferring groups other than amino-acyl groups"/>
    <property type="evidence" value="ECO:0007669"/>
    <property type="project" value="InterPro"/>
</dbReference>
<dbReference type="CDD" id="cd04301">
    <property type="entry name" value="NAT_SF"/>
    <property type="match status" value="1"/>
</dbReference>
<dbReference type="Gene3D" id="3.40.630.30">
    <property type="match status" value="1"/>
</dbReference>
<dbReference type="InterPro" id="IPR016181">
    <property type="entry name" value="Acyl_CoA_acyltransferase"/>
</dbReference>
<dbReference type="InterPro" id="IPR050832">
    <property type="entry name" value="Bact_Acetyltransf"/>
</dbReference>
<dbReference type="InterPro" id="IPR000182">
    <property type="entry name" value="GNAT_dom"/>
</dbReference>
<dbReference type="PANTHER" id="PTHR43877:SF2">
    <property type="entry name" value="AMINOALKYLPHOSPHONATE N-ACETYLTRANSFERASE-RELATED"/>
    <property type="match status" value="1"/>
</dbReference>
<dbReference type="PANTHER" id="PTHR43877">
    <property type="entry name" value="AMINOALKYLPHOSPHONATE N-ACETYLTRANSFERASE-RELATED-RELATED"/>
    <property type="match status" value="1"/>
</dbReference>
<dbReference type="Pfam" id="PF00583">
    <property type="entry name" value="Acetyltransf_1"/>
    <property type="match status" value="1"/>
</dbReference>
<dbReference type="SUPFAM" id="SSF55729">
    <property type="entry name" value="Acyl-CoA N-acyltransferases (Nat)"/>
    <property type="match status" value="1"/>
</dbReference>
<dbReference type="PROSITE" id="PS51186">
    <property type="entry name" value="GNAT"/>
    <property type="match status" value="1"/>
</dbReference>
<feature type="chain" id="PRO_0000360824" description="Uncharacterized N-acetyltransferase YesJ">
    <location>
        <begin position="1"/>
        <end position="180"/>
    </location>
</feature>
<feature type="domain" description="N-acetyltransferase" evidence="1">
    <location>
        <begin position="31"/>
        <end position="180"/>
    </location>
</feature>
<organism>
    <name type="scientific">Bacillus subtilis (strain 168)</name>
    <dbReference type="NCBI Taxonomy" id="224308"/>
    <lineage>
        <taxon>Bacteria</taxon>
        <taxon>Bacillati</taxon>
        <taxon>Bacillota</taxon>
        <taxon>Bacilli</taxon>
        <taxon>Bacillales</taxon>
        <taxon>Bacillaceae</taxon>
        <taxon>Bacillus</taxon>
    </lineage>
</organism>
<protein>
    <recommendedName>
        <fullName>Uncharacterized N-acetyltransferase YesJ</fullName>
        <ecNumber>2.3.1.-</ecNumber>
    </recommendedName>
</protein>
<keyword id="KW-0012">Acyltransferase</keyword>
<keyword id="KW-1185">Reference proteome</keyword>
<keyword id="KW-0808">Transferase</keyword>
<comment type="similarity">
    <text evidence="2">Belongs to the acetyltransferase family.</text>
</comment>